<sequence>MRARPLTLLTALAAVTLVVVAGCEARVEAEAYSAADRISSRPQARPQPQPVELLLRAITPPRAPAASPNVGFGELPTRVRQATDEAAAMGATLSVAVLDRATGQLVSNGNTQIIATASVAKLFIADDLLLAEAEGKVTLSPEDHHALDVMLQSSDDGAAERFWSQDGGNAVVTQVARRYGLRSTAPPSDGRWWNTISSAPDLIRYYDMLLDGSGGLPLDRAAVIIADLAQSTPTGIDGYPQRFGIPDGLYAEPVAVKQGWMCCIGSSWMHLSTGVIGPERRYIMVIESLQPADDATARATITQAVRTMFPNGRI</sequence>
<gene>
    <name type="primary">lppW</name>
    <name type="ordered locus">Rv2905</name>
    <name type="ORF">MTCY274.36</name>
</gene>
<evidence type="ECO:0000255" key="1">
    <source>
        <dbReference type="PROSITE-ProRule" id="PRU00303"/>
    </source>
</evidence>
<proteinExistence type="evidence at protein level"/>
<comment type="subcellular location">
    <subcellularLocation>
        <location evidence="1">Cell membrane</location>
        <topology evidence="1">Lipid-anchor</topology>
    </subcellularLocation>
</comment>
<keyword id="KW-1003">Cell membrane</keyword>
<keyword id="KW-0449">Lipoprotein</keyword>
<keyword id="KW-0472">Membrane</keyword>
<keyword id="KW-0564">Palmitate</keyword>
<keyword id="KW-1185">Reference proteome</keyword>
<keyword id="KW-0732">Signal</keyword>
<organism>
    <name type="scientific">Mycobacterium tuberculosis (strain ATCC 25618 / H37Rv)</name>
    <dbReference type="NCBI Taxonomy" id="83332"/>
    <lineage>
        <taxon>Bacteria</taxon>
        <taxon>Bacillati</taxon>
        <taxon>Actinomycetota</taxon>
        <taxon>Actinomycetes</taxon>
        <taxon>Mycobacteriales</taxon>
        <taxon>Mycobacteriaceae</taxon>
        <taxon>Mycobacterium</taxon>
        <taxon>Mycobacterium tuberculosis complex</taxon>
    </lineage>
</organism>
<reference key="1">
    <citation type="journal article" date="1998" name="Nature">
        <title>Deciphering the biology of Mycobacterium tuberculosis from the complete genome sequence.</title>
        <authorList>
            <person name="Cole S.T."/>
            <person name="Brosch R."/>
            <person name="Parkhill J."/>
            <person name="Garnier T."/>
            <person name="Churcher C.M."/>
            <person name="Harris D.E."/>
            <person name="Gordon S.V."/>
            <person name="Eiglmeier K."/>
            <person name="Gas S."/>
            <person name="Barry C.E. III"/>
            <person name="Tekaia F."/>
            <person name="Badcock K."/>
            <person name="Basham D."/>
            <person name="Brown D."/>
            <person name="Chillingworth T."/>
            <person name="Connor R."/>
            <person name="Davies R.M."/>
            <person name="Devlin K."/>
            <person name="Feltwell T."/>
            <person name="Gentles S."/>
            <person name="Hamlin N."/>
            <person name="Holroyd S."/>
            <person name="Hornsby T."/>
            <person name="Jagels K."/>
            <person name="Krogh A."/>
            <person name="McLean J."/>
            <person name="Moule S."/>
            <person name="Murphy L.D."/>
            <person name="Oliver S."/>
            <person name="Osborne J."/>
            <person name="Quail M.A."/>
            <person name="Rajandream M.A."/>
            <person name="Rogers J."/>
            <person name="Rutter S."/>
            <person name="Seeger K."/>
            <person name="Skelton S."/>
            <person name="Squares S."/>
            <person name="Squares R."/>
            <person name="Sulston J.E."/>
            <person name="Taylor K."/>
            <person name="Whitehead S."/>
            <person name="Barrell B.G."/>
        </authorList>
    </citation>
    <scope>NUCLEOTIDE SEQUENCE [LARGE SCALE GENOMIC DNA]</scope>
    <source>
        <strain>ATCC 25618 / H37Rv</strain>
    </source>
</reference>
<reference key="2">
    <citation type="journal article" date="2011" name="Mol. Cell. Proteomics">
        <title>Proteogenomic analysis of Mycobacterium tuberculosis by high resolution mass spectrometry.</title>
        <authorList>
            <person name="Kelkar D.S."/>
            <person name="Kumar D."/>
            <person name="Kumar P."/>
            <person name="Balakrishnan L."/>
            <person name="Muthusamy B."/>
            <person name="Yadav A.K."/>
            <person name="Shrivastava P."/>
            <person name="Marimuthu A."/>
            <person name="Anand S."/>
            <person name="Sundaram H."/>
            <person name="Kingsbury R."/>
            <person name="Harsha H.C."/>
            <person name="Nair B."/>
            <person name="Prasad T.S."/>
            <person name="Chauhan D.S."/>
            <person name="Katoch K."/>
            <person name="Katoch V.M."/>
            <person name="Kumar P."/>
            <person name="Chaerkady R."/>
            <person name="Ramachandran S."/>
            <person name="Dash D."/>
            <person name="Pandey A."/>
        </authorList>
    </citation>
    <scope>IDENTIFICATION BY MASS SPECTROMETRY [LARGE SCALE ANALYSIS]</scope>
    <source>
        <strain>ATCC 25618 / H37Rv</strain>
    </source>
</reference>
<accession>P9WK67</accession>
<accession>L0TDW9</accession>
<accession>P65304</accession>
<accession>Q10823</accession>
<protein>
    <recommendedName>
        <fullName>Putative lipoprotein LppW</fullName>
    </recommendedName>
</protein>
<dbReference type="EMBL" id="AL123456">
    <property type="protein sequence ID" value="CCP45707.1"/>
    <property type="molecule type" value="Genomic_DNA"/>
</dbReference>
<dbReference type="PIR" id="D70927">
    <property type="entry name" value="D70927"/>
</dbReference>
<dbReference type="RefSeq" id="NP_217421.1">
    <property type="nucleotide sequence ID" value="NC_000962.3"/>
</dbReference>
<dbReference type="RefSeq" id="WP_003414720.1">
    <property type="nucleotide sequence ID" value="NZ_NVQJ01000006.1"/>
</dbReference>
<dbReference type="SMR" id="P9WK67"/>
<dbReference type="STRING" id="83332.Rv2905"/>
<dbReference type="PaxDb" id="83332-Rv2905"/>
<dbReference type="DNASU" id="887421"/>
<dbReference type="GeneID" id="887421"/>
<dbReference type="KEGG" id="mtu:Rv2905"/>
<dbReference type="KEGG" id="mtv:RVBD_2905"/>
<dbReference type="TubercuList" id="Rv2905"/>
<dbReference type="eggNOG" id="COG2367">
    <property type="taxonomic scope" value="Bacteria"/>
</dbReference>
<dbReference type="InParanoid" id="P9WK67"/>
<dbReference type="OrthoDB" id="4981298at2"/>
<dbReference type="Proteomes" id="UP000001584">
    <property type="component" value="Chromosome"/>
</dbReference>
<dbReference type="GO" id="GO:0005576">
    <property type="term" value="C:extracellular region"/>
    <property type="evidence" value="ECO:0007005"/>
    <property type="project" value="MTBBASE"/>
</dbReference>
<dbReference type="GO" id="GO:0005886">
    <property type="term" value="C:plasma membrane"/>
    <property type="evidence" value="ECO:0007669"/>
    <property type="project" value="UniProtKB-SubCell"/>
</dbReference>
<dbReference type="GO" id="GO:0008800">
    <property type="term" value="F:beta-lactamase activity"/>
    <property type="evidence" value="ECO:0007669"/>
    <property type="project" value="InterPro"/>
</dbReference>
<dbReference type="GO" id="GO:0030655">
    <property type="term" value="P:beta-lactam antibiotic catabolic process"/>
    <property type="evidence" value="ECO:0007669"/>
    <property type="project" value="InterPro"/>
</dbReference>
<dbReference type="GO" id="GO:0046677">
    <property type="term" value="P:response to antibiotic"/>
    <property type="evidence" value="ECO:0007669"/>
    <property type="project" value="InterPro"/>
</dbReference>
<dbReference type="Gene3D" id="3.40.710.10">
    <property type="entry name" value="DD-peptidase/beta-lactamase superfamily"/>
    <property type="match status" value="1"/>
</dbReference>
<dbReference type="InterPro" id="IPR012338">
    <property type="entry name" value="Beta-lactam/transpept-like"/>
</dbReference>
<dbReference type="InterPro" id="IPR000871">
    <property type="entry name" value="Beta-lactam_class-A"/>
</dbReference>
<dbReference type="PANTHER" id="PTHR35333">
    <property type="entry name" value="BETA-LACTAMASE"/>
    <property type="match status" value="1"/>
</dbReference>
<dbReference type="PANTHER" id="PTHR35333:SF3">
    <property type="entry name" value="BETA-LACTAMASE-TYPE TRANSPEPTIDASE FOLD CONTAINING PROTEIN"/>
    <property type="match status" value="1"/>
</dbReference>
<dbReference type="SUPFAM" id="SSF56601">
    <property type="entry name" value="beta-lactamase/transpeptidase-like"/>
    <property type="match status" value="1"/>
</dbReference>
<dbReference type="PROSITE" id="PS51257">
    <property type="entry name" value="PROKAR_LIPOPROTEIN"/>
    <property type="match status" value="1"/>
</dbReference>
<name>LPPW_MYCTU</name>
<feature type="signal peptide" evidence="1">
    <location>
        <begin position="1"/>
        <end position="22"/>
    </location>
</feature>
<feature type="chain" id="PRO_0000018118" description="Putative lipoprotein LppW">
    <location>
        <begin position="23"/>
        <end position="314"/>
    </location>
</feature>
<feature type="lipid moiety-binding region" description="N-palmitoyl cysteine" evidence="1">
    <location>
        <position position="23"/>
    </location>
</feature>
<feature type="lipid moiety-binding region" description="S-diacylglycerol cysteine" evidence="1">
    <location>
        <position position="23"/>
    </location>
</feature>